<comment type="function">
    <text evidence="1">Involved in the methylaspartate cycle. Catalyzes the formation of the alpha,beta-unsaturated bond by the reversible anti elimination of ammonia from L-threo-beta-methylaspartate (L-threo-(2S,3S)-3-methylaspartate) to give mesaconate (By similarity).</text>
</comment>
<comment type="catalytic activity">
    <reaction>
        <text>(2S,3S)-3-methyl-L-aspartate = mesaconate + NH4(+)</text>
        <dbReference type="Rhea" id="RHEA:12829"/>
        <dbReference type="ChEBI" id="CHEBI:28938"/>
        <dbReference type="ChEBI" id="CHEBI:36986"/>
        <dbReference type="ChEBI" id="CHEBI:58724"/>
        <dbReference type="EC" id="4.3.1.2"/>
    </reaction>
</comment>
<comment type="cofactor">
    <cofactor evidence="2">
        <name>Mg(2+)</name>
        <dbReference type="ChEBI" id="CHEBI:18420"/>
    </cofactor>
</comment>
<comment type="pathway">
    <text>Amino-acid degradation; L-glutamate degradation via mesaconate pathway; acetate and pyruvate from L-glutamate: step 2/4.</text>
</comment>
<comment type="subunit">
    <text evidence="2">Homodimer.</text>
</comment>
<comment type="similarity">
    <text evidence="3">Belongs to the methylaspartate ammonia-lyase family.</text>
</comment>
<dbReference type="EC" id="4.3.1.2"/>
<dbReference type="EMBL" id="AB005294">
    <property type="protein sequence ID" value="BAA28709.1"/>
    <property type="molecule type" value="Genomic_DNA"/>
</dbReference>
<dbReference type="PIR" id="T43810">
    <property type="entry name" value="T43810"/>
</dbReference>
<dbReference type="PDB" id="1KKO">
    <property type="method" value="X-ray"/>
    <property type="resolution" value="1.33 A"/>
    <property type="chains" value="A/B=1-413"/>
</dbReference>
<dbReference type="PDB" id="1KKR">
    <property type="method" value="X-ray"/>
    <property type="resolution" value="2.10 A"/>
    <property type="chains" value="A/B=1-413"/>
</dbReference>
<dbReference type="PDBsum" id="1KKO"/>
<dbReference type="PDBsum" id="1KKR"/>
<dbReference type="SMR" id="O66145"/>
<dbReference type="STRING" id="35703.AL524_19000"/>
<dbReference type="DrugBank" id="DB04538">
    <property type="generic name" value="threo-3-methyl-L-aspartic acid"/>
</dbReference>
<dbReference type="eggNOG" id="COG3799">
    <property type="taxonomic scope" value="Bacteria"/>
</dbReference>
<dbReference type="UniPathway" id="UPA00561">
    <property type="reaction ID" value="UER00618"/>
</dbReference>
<dbReference type="EvolutionaryTrace" id="O66145"/>
<dbReference type="GO" id="GO:0046872">
    <property type="term" value="F:metal ion binding"/>
    <property type="evidence" value="ECO:0007669"/>
    <property type="project" value="UniProtKB-KW"/>
</dbReference>
<dbReference type="GO" id="GO:0050096">
    <property type="term" value="F:methylaspartate ammonia-lyase activity"/>
    <property type="evidence" value="ECO:0007669"/>
    <property type="project" value="UniProtKB-EC"/>
</dbReference>
<dbReference type="GO" id="GO:0019553">
    <property type="term" value="P:glutamate catabolic process via L-citramalate"/>
    <property type="evidence" value="ECO:0007669"/>
    <property type="project" value="UniProtKB-UniPathway"/>
</dbReference>
<dbReference type="CDD" id="cd03314">
    <property type="entry name" value="MAL"/>
    <property type="match status" value="1"/>
</dbReference>
<dbReference type="Gene3D" id="3.20.20.120">
    <property type="entry name" value="Enolase-like C-terminal domain"/>
    <property type="match status" value="1"/>
</dbReference>
<dbReference type="Gene3D" id="3.30.390.10">
    <property type="entry name" value="Enolase-like, N-terminal domain"/>
    <property type="match status" value="1"/>
</dbReference>
<dbReference type="InterPro" id="IPR036849">
    <property type="entry name" value="Enolase-like_C_sf"/>
</dbReference>
<dbReference type="InterPro" id="IPR029017">
    <property type="entry name" value="Enolase-like_N"/>
</dbReference>
<dbReference type="InterPro" id="IPR006395">
    <property type="entry name" value="Me_Asp_am_lyase"/>
</dbReference>
<dbReference type="InterPro" id="IPR022662">
    <property type="entry name" value="MeAsp_NH4-lyase_C"/>
</dbReference>
<dbReference type="InterPro" id="IPR022665">
    <property type="entry name" value="MeAsp_NH4-lyase_N"/>
</dbReference>
<dbReference type="NCBIfam" id="TIGR01502">
    <property type="entry name" value="B_methylAsp_ase"/>
    <property type="match status" value="1"/>
</dbReference>
<dbReference type="PANTHER" id="PTHR48073:SF2">
    <property type="entry name" value="O-SUCCINYLBENZOATE SYNTHASE"/>
    <property type="match status" value="1"/>
</dbReference>
<dbReference type="PANTHER" id="PTHR48073">
    <property type="entry name" value="O-SUCCINYLBENZOATE SYNTHASE-RELATED"/>
    <property type="match status" value="1"/>
</dbReference>
<dbReference type="Pfam" id="PF07476">
    <property type="entry name" value="MAAL_C"/>
    <property type="match status" value="1"/>
</dbReference>
<dbReference type="Pfam" id="PF05034">
    <property type="entry name" value="MAAL_N"/>
    <property type="match status" value="1"/>
</dbReference>
<dbReference type="PIRSF" id="PIRSF017107">
    <property type="entry name" value="MAL"/>
    <property type="match status" value="1"/>
</dbReference>
<dbReference type="SFLD" id="SFLDF00007">
    <property type="entry name" value="methylaspartate_ammonia-lyase"/>
    <property type="match status" value="1"/>
</dbReference>
<dbReference type="SFLD" id="SFLDG00151">
    <property type="entry name" value="methylaspartate_ammonia-lyase"/>
    <property type="match status" value="1"/>
</dbReference>
<dbReference type="SUPFAM" id="SSF51604">
    <property type="entry name" value="Enolase C-terminal domain-like"/>
    <property type="match status" value="1"/>
</dbReference>
<dbReference type="SUPFAM" id="SSF54826">
    <property type="entry name" value="Enolase N-terminal domain-like"/>
    <property type="match status" value="1"/>
</dbReference>
<feature type="chain" id="PRO_0000429367" description="Methylaspartate ammonia-lyase">
    <location>
        <begin position="1"/>
        <end position="413"/>
    </location>
</feature>
<feature type="active site" description="Proton acceptor" evidence="2">
    <location>
        <position position="331"/>
    </location>
</feature>
<feature type="binding site" evidence="2">
    <location>
        <position position="172"/>
    </location>
    <ligand>
        <name>(2S,3S)-3-methyl-L-aspartate</name>
        <dbReference type="ChEBI" id="CHEBI:58724"/>
    </ligand>
</feature>
<feature type="binding site" evidence="2">
    <location>
        <position position="238"/>
    </location>
    <ligand>
        <name>Mg(2+)</name>
        <dbReference type="ChEBI" id="CHEBI:18420"/>
    </ligand>
</feature>
<feature type="binding site" evidence="2">
    <location>
        <position position="273"/>
    </location>
    <ligand>
        <name>Mg(2+)</name>
        <dbReference type="ChEBI" id="CHEBI:18420"/>
    </ligand>
</feature>
<feature type="binding site" evidence="2">
    <location>
        <position position="307"/>
    </location>
    <ligand>
        <name>Mg(2+)</name>
        <dbReference type="ChEBI" id="CHEBI:18420"/>
    </ligand>
</feature>
<feature type="binding site" evidence="2">
    <location>
        <position position="329"/>
    </location>
    <ligand>
        <name>(2S,3S)-3-methyl-L-aspartate</name>
        <dbReference type="ChEBI" id="CHEBI:58724"/>
    </ligand>
</feature>
<feature type="binding site">
    <location>
        <begin position="360"/>
        <end position="361"/>
    </location>
    <ligand>
        <name>(2S,3S)-3-methyl-L-aspartate</name>
        <dbReference type="ChEBI" id="CHEBI:58724"/>
    </ligand>
</feature>
<feature type="site" description="Transition state stabilizer">
    <location>
        <position position="194"/>
    </location>
</feature>
<feature type="strand" evidence="4">
    <location>
        <begin position="2"/>
        <end position="18"/>
    </location>
</feature>
<feature type="helix" evidence="4">
    <location>
        <begin position="20"/>
        <end position="24"/>
    </location>
</feature>
<feature type="strand" evidence="4">
    <location>
        <begin position="44"/>
        <end position="59"/>
    </location>
</feature>
<feature type="strand" evidence="4">
    <location>
        <begin position="64"/>
        <end position="69"/>
    </location>
</feature>
<feature type="turn" evidence="4">
    <location>
        <begin position="73"/>
        <end position="76"/>
    </location>
</feature>
<feature type="helix" evidence="4">
    <location>
        <begin position="86"/>
        <end position="96"/>
    </location>
</feature>
<feature type="helix" evidence="4">
    <location>
        <begin position="98"/>
        <end position="101"/>
    </location>
</feature>
<feature type="helix" evidence="4">
    <location>
        <begin position="110"/>
        <end position="118"/>
    </location>
</feature>
<feature type="helix" evidence="4">
    <location>
        <begin position="128"/>
        <end position="145"/>
    </location>
</feature>
<feature type="helix" evidence="4">
    <location>
        <begin position="150"/>
        <end position="157"/>
    </location>
</feature>
<feature type="helix" evidence="4">
    <location>
        <begin position="179"/>
        <end position="186"/>
    </location>
</feature>
<feature type="strand" evidence="4">
    <location>
        <begin position="190"/>
        <end position="194"/>
    </location>
</feature>
<feature type="helix" evidence="4">
    <location>
        <begin position="200"/>
        <end position="204"/>
    </location>
</feature>
<feature type="helix" evidence="4">
    <location>
        <begin position="209"/>
        <end position="225"/>
    </location>
</feature>
<feature type="strand" evidence="4">
    <location>
        <begin position="234"/>
        <end position="238"/>
    </location>
</feature>
<feature type="helix" evidence="4">
    <location>
        <begin position="242"/>
        <end position="246"/>
    </location>
</feature>
<feature type="turn" evidence="4">
    <location>
        <begin position="247"/>
        <end position="249"/>
    </location>
</feature>
<feature type="helix" evidence="4">
    <location>
        <begin position="251"/>
        <end position="260"/>
    </location>
</feature>
<feature type="helix" evidence="4">
    <location>
        <begin position="261"/>
        <end position="265"/>
    </location>
</feature>
<feature type="strand" evidence="4">
    <location>
        <begin position="270"/>
        <end position="273"/>
    </location>
</feature>
<feature type="helix" evidence="4">
    <location>
        <begin position="281"/>
        <end position="298"/>
    </location>
</feature>
<feature type="strand" evidence="4">
    <location>
        <begin position="303"/>
        <end position="306"/>
    </location>
</feature>
<feature type="helix" evidence="4">
    <location>
        <begin position="313"/>
        <end position="321"/>
    </location>
</feature>
<feature type="strand" evidence="4">
    <location>
        <begin position="326"/>
        <end position="330"/>
    </location>
</feature>
<feature type="helix" evidence="4">
    <location>
        <begin position="332"/>
        <end position="335"/>
    </location>
</feature>
<feature type="helix" evidence="4">
    <location>
        <begin position="339"/>
        <end position="351"/>
    </location>
</feature>
<feature type="strand" evidence="4">
    <location>
        <begin position="354"/>
        <end position="357"/>
    </location>
</feature>
<feature type="helix" evidence="4">
    <location>
        <begin position="365"/>
        <end position="378"/>
    </location>
</feature>
<feature type="strand" evidence="4">
    <location>
        <begin position="381"/>
        <end position="384"/>
    </location>
</feature>
<feature type="strand" evidence="4">
    <location>
        <begin position="389"/>
        <end position="391"/>
    </location>
</feature>
<feature type="helix" evidence="4">
    <location>
        <begin position="392"/>
        <end position="410"/>
    </location>
</feature>
<proteinExistence type="evidence at protein level"/>
<reference key="1">
    <citation type="journal article" date="1998" name="Appl. Microbiol. Biotechnol.">
        <title>Cloning, nucleotide sequencing, and expression of the 3-methylaspartate ammonia-lyase gene from Citrobacter amalonaticus strain YG-1002.</title>
        <authorList>
            <person name="Kato Y."/>
            <person name="Asano Y."/>
        </authorList>
    </citation>
    <scope>NUCLEOTIDE SEQUENCE [GENOMIC DNA]</scope>
    <source>
        <strain>YG-1002</strain>
    </source>
</reference>
<reference key="2">
    <citation type="journal article" date="2002" name="Structure">
        <title>Insights into enzyme evolution revealed by the structure of methylaspartate ammonia lyase.</title>
        <authorList>
            <person name="Levy C.W."/>
            <person name="Buckley P.A."/>
            <person name="Sedelnikova S."/>
            <person name="Kato Y."/>
            <person name="Asano Y."/>
            <person name="Rice D.W."/>
            <person name="Baker P.J."/>
        </authorList>
    </citation>
    <scope>X-RAY CRYSTALLOGRAPHY (1.33 ANGSTROMS) IN COMPLEX WITH L-THREO-BETA-METHYLASPARTATE AND MAGNESIUM</scope>
    <scope>ACTIVE SITE</scope>
    <scope>COFACTOR</scope>
    <scope>SUBUNIT</scope>
</reference>
<organism>
    <name type="scientific">Citrobacter amalonaticus</name>
    <dbReference type="NCBI Taxonomy" id="35703"/>
    <lineage>
        <taxon>Bacteria</taxon>
        <taxon>Pseudomonadati</taxon>
        <taxon>Pseudomonadota</taxon>
        <taxon>Gammaproteobacteria</taxon>
        <taxon>Enterobacterales</taxon>
        <taxon>Enterobacteriaceae</taxon>
        <taxon>Citrobacter</taxon>
    </lineage>
</organism>
<keyword id="KW-0002">3D-structure</keyword>
<keyword id="KW-0456">Lyase</keyword>
<keyword id="KW-0460">Magnesium</keyword>
<keyword id="KW-0479">Metal-binding</keyword>
<accession>O66145</accession>
<evidence type="ECO:0000250" key="1"/>
<evidence type="ECO:0000269" key="2">
    <source>
    </source>
</evidence>
<evidence type="ECO:0000305" key="3"/>
<evidence type="ECO:0007829" key="4">
    <source>
        <dbReference type="PDB" id="1KKO"/>
    </source>
</evidence>
<protein>
    <recommendedName>
        <fullName>Methylaspartate ammonia-lyase</fullName>
        <shortName>MAL</shortName>
        <ecNumber>4.3.1.2</ecNumber>
    </recommendedName>
    <alternativeName>
        <fullName>3-methylaspartate ammonia-lyase</fullName>
    </alternativeName>
    <alternativeName>
        <fullName>Beta-methylaspartase</fullName>
    </alternativeName>
</protein>
<sequence>MKIKQALFTAGYSSFYFDDQQAIKNGAGHDGFIYTGDPVTPGFTSVRQAGECVSVQLILENGAVAVGDCAAVQYSGAGGRDPLFLAEHFIPFLNDHIKPLLEGRDVDAFLPNARFFDKLRIDGNLLHTAVRYGLSQALLDATALASGRLKTEVVCDEWQLPCVPEAIPLFGQSGDDRYIAVDKMILKGVDVLPHALINNVEEKLGFKGEKLREYVRWLSDRILSLRSSPRYHPTLHIDVYGTIGLIFDMDPVRCAEYIASLEKEAQGLPLYIEGPVDAGNKPDQIRMLTAITKELTRLGSGVKIVADEWCNTYQDIVDFTDAGSCHMVQIKTPDLGGIHNIVDAVLYCNKHGMEAYQGGTCNETEISARTCVHVALAARPMRMLIKPGMGFDEGLNIVFNEMNRTIALLQTKD</sequence>
<name>MAAL_CITAM</name>